<accession>A0RP87</accession>
<gene>
    <name evidence="1" type="primary">murG</name>
    <name type="ordered locus">CFF8240_0845</name>
</gene>
<name>MURG_CAMFF</name>
<dbReference type="EC" id="2.4.1.227" evidence="1"/>
<dbReference type="EMBL" id="CP000487">
    <property type="protein sequence ID" value="ABK82374.1"/>
    <property type="molecule type" value="Genomic_DNA"/>
</dbReference>
<dbReference type="RefSeq" id="WP_002849334.1">
    <property type="nucleotide sequence ID" value="NC_008599.1"/>
</dbReference>
<dbReference type="SMR" id="A0RP87"/>
<dbReference type="CAZy" id="GT28">
    <property type="family name" value="Glycosyltransferase Family 28"/>
</dbReference>
<dbReference type="KEGG" id="cff:CFF8240_0845"/>
<dbReference type="eggNOG" id="COG0707">
    <property type="taxonomic scope" value="Bacteria"/>
</dbReference>
<dbReference type="HOGENOM" id="CLU_037404_2_1_7"/>
<dbReference type="UniPathway" id="UPA00219"/>
<dbReference type="Proteomes" id="UP000000760">
    <property type="component" value="Chromosome"/>
</dbReference>
<dbReference type="GO" id="GO:0005886">
    <property type="term" value="C:plasma membrane"/>
    <property type="evidence" value="ECO:0007669"/>
    <property type="project" value="UniProtKB-SubCell"/>
</dbReference>
<dbReference type="GO" id="GO:0051991">
    <property type="term" value="F:UDP-N-acetyl-D-glucosamine:N-acetylmuramoyl-L-alanyl-D-glutamyl-meso-2,6-diaminopimelyl-D-alanyl-D-alanine-diphosphoundecaprenol 4-beta-N-acetylglucosaminlytransferase activity"/>
    <property type="evidence" value="ECO:0007669"/>
    <property type="project" value="RHEA"/>
</dbReference>
<dbReference type="GO" id="GO:0050511">
    <property type="term" value="F:undecaprenyldiphospho-muramoylpentapeptide beta-N-acetylglucosaminyltransferase activity"/>
    <property type="evidence" value="ECO:0007669"/>
    <property type="project" value="UniProtKB-UniRule"/>
</dbReference>
<dbReference type="GO" id="GO:0005975">
    <property type="term" value="P:carbohydrate metabolic process"/>
    <property type="evidence" value="ECO:0007669"/>
    <property type="project" value="InterPro"/>
</dbReference>
<dbReference type="GO" id="GO:0051301">
    <property type="term" value="P:cell division"/>
    <property type="evidence" value="ECO:0007669"/>
    <property type="project" value="UniProtKB-KW"/>
</dbReference>
<dbReference type="GO" id="GO:0071555">
    <property type="term" value="P:cell wall organization"/>
    <property type="evidence" value="ECO:0007669"/>
    <property type="project" value="UniProtKB-KW"/>
</dbReference>
<dbReference type="GO" id="GO:0030259">
    <property type="term" value="P:lipid glycosylation"/>
    <property type="evidence" value="ECO:0007669"/>
    <property type="project" value="UniProtKB-UniRule"/>
</dbReference>
<dbReference type="GO" id="GO:0009252">
    <property type="term" value="P:peptidoglycan biosynthetic process"/>
    <property type="evidence" value="ECO:0007669"/>
    <property type="project" value="UniProtKB-UniRule"/>
</dbReference>
<dbReference type="GO" id="GO:0008360">
    <property type="term" value="P:regulation of cell shape"/>
    <property type="evidence" value="ECO:0007669"/>
    <property type="project" value="UniProtKB-KW"/>
</dbReference>
<dbReference type="CDD" id="cd03785">
    <property type="entry name" value="GT28_MurG"/>
    <property type="match status" value="1"/>
</dbReference>
<dbReference type="Gene3D" id="3.40.50.2000">
    <property type="entry name" value="Glycogen Phosphorylase B"/>
    <property type="match status" value="2"/>
</dbReference>
<dbReference type="HAMAP" id="MF_00033">
    <property type="entry name" value="MurG"/>
    <property type="match status" value="1"/>
</dbReference>
<dbReference type="InterPro" id="IPR006009">
    <property type="entry name" value="GlcNAc_MurG"/>
</dbReference>
<dbReference type="InterPro" id="IPR007235">
    <property type="entry name" value="Glyco_trans_28_C"/>
</dbReference>
<dbReference type="InterPro" id="IPR004276">
    <property type="entry name" value="GlycoTrans_28_N"/>
</dbReference>
<dbReference type="PANTHER" id="PTHR21015:SF22">
    <property type="entry name" value="GLYCOSYLTRANSFERASE"/>
    <property type="match status" value="1"/>
</dbReference>
<dbReference type="PANTHER" id="PTHR21015">
    <property type="entry name" value="UDP-N-ACETYLGLUCOSAMINE--N-ACETYLMURAMYL-(PENTAPEPTIDE) PYROPHOSPHORYL-UNDECAPRENOL N-ACETYLGLUCOSAMINE TRANSFERASE 1"/>
    <property type="match status" value="1"/>
</dbReference>
<dbReference type="Pfam" id="PF04101">
    <property type="entry name" value="Glyco_tran_28_C"/>
    <property type="match status" value="1"/>
</dbReference>
<dbReference type="Pfam" id="PF03033">
    <property type="entry name" value="Glyco_transf_28"/>
    <property type="match status" value="1"/>
</dbReference>
<dbReference type="SUPFAM" id="SSF53756">
    <property type="entry name" value="UDP-Glycosyltransferase/glycogen phosphorylase"/>
    <property type="match status" value="1"/>
</dbReference>
<organism>
    <name type="scientific">Campylobacter fetus subsp. fetus (strain 82-40)</name>
    <dbReference type="NCBI Taxonomy" id="360106"/>
    <lineage>
        <taxon>Bacteria</taxon>
        <taxon>Pseudomonadati</taxon>
        <taxon>Campylobacterota</taxon>
        <taxon>Epsilonproteobacteria</taxon>
        <taxon>Campylobacterales</taxon>
        <taxon>Campylobacteraceae</taxon>
        <taxon>Campylobacter</taxon>
    </lineage>
</organism>
<evidence type="ECO:0000255" key="1">
    <source>
        <dbReference type="HAMAP-Rule" id="MF_00033"/>
    </source>
</evidence>
<keyword id="KW-0131">Cell cycle</keyword>
<keyword id="KW-0132">Cell division</keyword>
<keyword id="KW-0997">Cell inner membrane</keyword>
<keyword id="KW-1003">Cell membrane</keyword>
<keyword id="KW-0133">Cell shape</keyword>
<keyword id="KW-0961">Cell wall biogenesis/degradation</keyword>
<keyword id="KW-0328">Glycosyltransferase</keyword>
<keyword id="KW-0472">Membrane</keyword>
<keyword id="KW-0573">Peptidoglycan synthesis</keyword>
<keyword id="KW-0808">Transferase</keyword>
<reference key="1">
    <citation type="submission" date="2006-11" db="EMBL/GenBank/DDBJ databases">
        <title>Sequence of Campylobacter fetus subsp. fetus 82-40.</title>
        <authorList>
            <person name="Fouts D.E."/>
            <person name="Nelson K.E."/>
        </authorList>
    </citation>
    <scope>NUCLEOTIDE SEQUENCE [LARGE SCALE GENOMIC DNA]</scope>
    <source>
        <strain>82-40</strain>
    </source>
</reference>
<protein>
    <recommendedName>
        <fullName evidence="1">UDP-N-acetylglucosamine--N-acetylmuramyl-(pentapeptide) pyrophosphoryl-undecaprenol N-acetylglucosamine transferase</fullName>
        <ecNumber evidence="1">2.4.1.227</ecNumber>
    </recommendedName>
    <alternativeName>
        <fullName evidence="1">Undecaprenyl-PP-MurNAc-pentapeptide-UDPGlcNAc GlcNAc transferase</fullName>
    </alternativeName>
</protein>
<sequence>MIAITGGGTGGHLAIAKALAIELKNRGENVIFIGSNSGQDRMWFEHSDIFKFKYFFPSRGVVNKKGIHKLFALLNIIKLAFKCRCIFTEHNISSVISVGGYSSAPASFGAVIFRKKLFIHEQNAIKGKLNSILKPFCKKFFSSYGTDTYDYPIDIKFFNTARVRNELKTILFLGGSQGASFINSLALNLALNLKNHNINIIHQCGAKELETTRSKYNEMGVEAVVFDFSNEIEVYMQKSDLCISRAGASTLWELCANALPTIFIPYPYAASNHQFYNAKFLLDSNLAKIYEQNGLDKNILFTDIMNLDINSISMGLRNIVSPNGAKIIIDKILKQ</sequence>
<comment type="function">
    <text evidence="1">Cell wall formation. Catalyzes the transfer of a GlcNAc subunit on undecaprenyl-pyrophosphoryl-MurNAc-pentapeptide (lipid intermediate I) to form undecaprenyl-pyrophosphoryl-MurNAc-(pentapeptide)GlcNAc (lipid intermediate II).</text>
</comment>
<comment type="catalytic activity">
    <reaction evidence="1">
        <text>di-trans,octa-cis-undecaprenyl diphospho-N-acetyl-alpha-D-muramoyl-L-alanyl-D-glutamyl-meso-2,6-diaminopimeloyl-D-alanyl-D-alanine + UDP-N-acetyl-alpha-D-glucosamine = di-trans,octa-cis-undecaprenyl diphospho-[N-acetyl-alpha-D-glucosaminyl-(1-&gt;4)]-N-acetyl-alpha-D-muramoyl-L-alanyl-D-glutamyl-meso-2,6-diaminopimeloyl-D-alanyl-D-alanine + UDP + H(+)</text>
        <dbReference type="Rhea" id="RHEA:31227"/>
        <dbReference type="ChEBI" id="CHEBI:15378"/>
        <dbReference type="ChEBI" id="CHEBI:57705"/>
        <dbReference type="ChEBI" id="CHEBI:58223"/>
        <dbReference type="ChEBI" id="CHEBI:61387"/>
        <dbReference type="ChEBI" id="CHEBI:61388"/>
        <dbReference type="EC" id="2.4.1.227"/>
    </reaction>
</comment>
<comment type="pathway">
    <text evidence="1">Cell wall biogenesis; peptidoglycan biosynthesis.</text>
</comment>
<comment type="subcellular location">
    <subcellularLocation>
        <location evidence="1">Cell inner membrane</location>
        <topology evidence="1">Peripheral membrane protein</topology>
        <orientation evidence="1">Cytoplasmic side</orientation>
    </subcellularLocation>
</comment>
<comment type="similarity">
    <text evidence="1">Belongs to the glycosyltransferase 28 family. MurG subfamily.</text>
</comment>
<proteinExistence type="inferred from homology"/>
<feature type="chain" id="PRO_0000315080" description="UDP-N-acetylglucosamine--N-acetylmuramyl-(pentapeptide) pyrophosphoryl-undecaprenol N-acetylglucosamine transferase">
    <location>
        <begin position="1"/>
        <end position="335"/>
    </location>
</feature>
<feature type="binding site" evidence="1">
    <location>
        <begin position="9"/>
        <end position="11"/>
    </location>
    <ligand>
        <name>UDP-N-acetyl-alpha-D-glucosamine</name>
        <dbReference type="ChEBI" id="CHEBI:57705"/>
    </ligand>
</feature>
<feature type="binding site" evidence="1">
    <location>
        <position position="123"/>
    </location>
    <ligand>
        <name>UDP-N-acetyl-alpha-D-glucosamine</name>
        <dbReference type="ChEBI" id="CHEBI:57705"/>
    </ligand>
</feature>
<feature type="binding site" evidence="1">
    <location>
        <position position="176"/>
    </location>
    <ligand>
        <name>UDP-N-acetyl-alpha-D-glucosamine</name>
        <dbReference type="ChEBI" id="CHEBI:57705"/>
    </ligand>
</feature>
<feature type="binding site" evidence="1">
    <location>
        <position position="274"/>
    </location>
    <ligand>
        <name>UDP-N-acetyl-alpha-D-glucosamine</name>
        <dbReference type="ChEBI" id="CHEBI:57705"/>
    </ligand>
</feature>